<dbReference type="EMBL" id="AL590442">
    <property type="protein sequence ID" value="CAD25134.1"/>
    <property type="molecule type" value="Genomic_DNA"/>
</dbReference>
<dbReference type="RefSeq" id="NP_584630.1">
    <property type="nucleotide sequence ID" value="NM_001040819.1"/>
</dbReference>
<dbReference type="SMR" id="Q8SWB5"/>
<dbReference type="STRING" id="284813.Q8SWB5"/>
<dbReference type="GeneID" id="858620"/>
<dbReference type="KEGG" id="ecu:ECU02_1050"/>
<dbReference type="VEuPathDB" id="MicrosporidiaDB:ECU02_1050"/>
<dbReference type="HOGENOM" id="CLU_140492_0_0_1"/>
<dbReference type="InParanoid" id="Q8SWB5"/>
<dbReference type="OMA" id="TDESHIH"/>
<dbReference type="OrthoDB" id="3169036at2759"/>
<dbReference type="Proteomes" id="UP000000819">
    <property type="component" value="Chromosome II"/>
</dbReference>
<dbReference type="GO" id="GO:0005737">
    <property type="term" value="C:cytoplasm"/>
    <property type="evidence" value="ECO:0007669"/>
    <property type="project" value="UniProtKB-SubCell"/>
</dbReference>
<dbReference type="GO" id="GO:0005634">
    <property type="term" value="C:nucleus"/>
    <property type="evidence" value="ECO:0007669"/>
    <property type="project" value="UniProtKB-SubCell"/>
</dbReference>
<dbReference type="GO" id="GO:0015031">
    <property type="term" value="P:protein transport"/>
    <property type="evidence" value="ECO:0007669"/>
    <property type="project" value="UniProtKB-KW"/>
</dbReference>
<dbReference type="CDD" id="cd14278">
    <property type="entry name" value="UBA_NAC_like"/>
    <property type="match status" value="1"/>
</dbReference>
<dbReference type="Gene3D" id="1.10.8.10">
    <property type="entry name" value="DNA helicase RuvA subunit, C-terminal domain"/>
    <property type="match status" value="1"/>
</dbReference>
<dbReference type="InterPro" id="IPR002715">
    <property type="entry name" value="Nas_poly-pep-assoc_cplx_dom"/>
</dbReference>
<dbReference type="PIRSF" id="PIRSF015901">
    <property type="entry name" value="NAC_alpha"/>
    <property type="match status" value="1"/>
</dbReference>
<dbReference type="PROSITE" id="PS51151">
    <property type="entry name" value="NAC_AB"/>
    <property type="match status" value="1"/>
</dbReference>
<name>NACA_ENCCU</name>
<feature type="chain" id="PRO_0000273490" description="Nascent polypeptide-associated complex subunit alpha">
    <location>
        <begin position="1"/>
        <end position="157"/>
    </location>
</feature>
<feature type="domain" description="NAC-A/B" evidence="2">
    <location>
        <begin position="6"/>
        <end position="71"/>
    </location>
</feature>
<feature type="domain" description="UBA">
    <location>
        <begin position="118"/>
        <end position="157"/>
    </location>
</feature>
<feature type="region of interest" description="Disordered" evidence="3">
    <location>
        <begin position="81"/>
        <end position="116"/>
    </location>
</feature>
<feature type="compositionally biased region" description="Basic and acidic residues" evidence="3">
    <location>
        <begin position="81"/>
        <end position="107"/>
    </location>
</feature>
<comment type="function">
    <text evidence="1">May be involved in mitochondrial protein import by enhancing productive ribosome interactions with the outer mitochondrial membrane and blocks the inappropriate interaction of ribosomes translating non-secretory nascent polypeptides with translocation sites in the membrane of the endoplasmic reticulum. EGD2 may also be involved in transcription regulation (By similarity).</text>
</comment>
<comment type="subcellular location">
    <subcellularLocation>
        <location evidence="1">Cytoplasm</location>
    </subcellularLocation>
    <subcellularLocation>
        <location evidence="1">Nucleus</location>
    </subcellularLocation>
    <text evidence="1">Predominantly cytoplasmic, may also transiently localize to the nucleus.</text>
</comment>
<comment type="similarity">
    <text evidence="4">Belongs to the NAC-alpha family.</text>
</comment>
<gene>
    <name type="primary">EGD2</name>
    <name type="ordered locus">ECU02_1050</name>
</gene>
<keyword id="KW-0963">Cytoplasm</keyword>
<keyword id="KW-0539">Nucleus</keyword>
<keyword id="KW-0653">Protein transport</keyword>
<keyword id="KW-1185">Reference proteome</keyword>
<keyword id="KW-0813">Transport</keyword>
<organism>
    <name type="scientific">Encephalitozoon cuniculi (strain GB-M1)</name>
    <name type="common">Microsporidian parasite</name>
    <dbReference type="NCBI Taxonomy" id="284813"/>
    <lineage>
        <taxon>Eukaryota</taxon>
        <taxon>Fungi</taxon>
        <taxon>Fungi incertae sedis</taxon>
        <taxon>Microsporidia</taxon>
        <taxon>Unikaryonidae</taxon>
        <taxon>Encephalitozoon</taxon>
    </lineage>
</organism>
<sequence length="157" mass="17517">MARALTTDESHIHKTLGAKVGLEEVEAVERIAIVVKDTRYSVESPVAYRIKGTDSILIFGDLGSPVNLHQLKRMYEDSIRSSKDQEGPGLYDEIHSDPQEDGVKEAEEITVDPSDERLSEEDIKLISSQVKASRNDIIKALVESEYDVVDAMMKLTK</sequence>
<reference key="1">
    <citation type="journal article" date="2001" name="Nature">
        <title>Genome sequence and gene compaction of the eukaryote parasite Encephalitozoon cuniculi.</title>
        <authorList>
            <person name="Katinka M.D."/>
            <person name="Duprat S."/>
            <person name="Cornillot E."/>
            <person name="Metenier G."/>
            <person name="Thomarat F."/>
            <person name="Prensier G."/>
            <person name="Barbe V."/>
            <person name="Peyretaillade E."/>
            <person name="Brottier P."/>
            <person name="Wincker P."/>
            <person name="Delbac F."/>
            <person name="El Alaoui H."/>
            <person name="Peyret P."/>
            <person name="Saurin W."/>
            <person name="Gouy M."/>
            <person name="Weissenbach J."/>
            <person name="Vivares C.P."/>
        </authorList>
    </citation>
    <scope>NUCLEOTIDE SEQUENCE [LARGE SCALE GENOMIC DNA]</scope>
    <source>
        <strain>GB-M1</strain>
    </source>
</reference>
<evidence type="ECO:0000250" key="1"/>
<evidence type="ECO:0000255" key="2">
    <source>
        <dbReference type="PROSITE-ProRule" id="PRU00507"/>
    </source>
</evidence>
<evidence type="ECO:0000256" key="3">
    <source>
        <dbReference type="SAM" id="MobiDB-lite"/>
    </source>
</evidence>
<evidence type="ECO:0000305" key="4"/>
<accession>Q8SWB5</accession>
<proteinExistence type="inferred from homology"/>
<protein>
    <recommendedName>
        <fullName>Nascent polypeptide-associated complex subunit alpha</fullName>
        <shortName>NAC-alpha</shortName>
    </recommendedName>
    <alternativeName>
        <fullName>Alpha-NAC</fullName>
    </alternativeName>
</protein>